<proteinExistence type="inferred from homology"/>
<accession>Q0SHC1</accession>
<evidence type="ECO:0000255" key="1">
    <source>
        <dbReference type="HAMAP-Rule" id="MF_00009"/>
    </source>
</evidence>
<organism>
    <name type="scientific">Rhodococcus jostii (strain RHA1)</name>
    <dbReference type="NCBI Taxonomy" id="101510"/>
    <lineage>
        <taxon>Bacteria</taxon>
        <taxon>Bacillati</taxon>
        <taxon>Actinomycetota</taxon>
        <taxon>Actinomycetes</taxon>
        <taxon>Mycobacteriales</taxon>
        <taxon>Nocardiaceae</taxon>
        <taxon>Rhodococcus</taxon>
    </lineage>
</organism>
<protein>
    <recommendedName>
        <fullName evidence="1">Endoribonuclease YbeY</fullName>
        <ecNumber evidence="1">3.1.-.-</ecNumber>
    </recommendedName>
</protein>
<sequence>MSIEVSNESGMDVSEEELISVARFVIARMDVHPAAELSMVLVDSATMADLHMRWMDLPGPTDVMSFPMDELEPGGRPDSPEPGPSMLGDIVLCPSFASDQADKAGHPLAHELALLTVHGVLHLLGYDHAEPEEEKEMFGLQNQLLEDWYEDLRRAERDAALAARDQKLLGKAGFFDSPDQ</sequence>
<gene>
    <name evidence="1" type="primary">ybeY</name>
    <name type="ordered locus">RHA1_ro01241</name>
</gene>
<reference key="1">
    <citation type="journal article" date="2006" name="Proc. Natl. Acad. Sci. U.S.A.">
        <title>The complete genome of Rhodococcus sp. RHA1 provides insights into a catabolic powerhouse.</title>
        <authorList>
            <person name="McLeod M.P."/>
            <person name="Warren R.L."/>
            <person name="Hsiao W.W.L."/>
            <person name="Araki N."/>
            <person name="Myhre M."/>
            <person name="Fernandes C."/>
            <person name="Miyazawa D."/>
            <person name="Wong W."/>
            <person name="Lillquist A.L."/>
            <person name="Wang D."/>
            <person name="Dosanjh M."/>
            <person name="Hara H."/>
            <person name="Petrescu A."/>
            <person name="Morin R.D."/>
            <person name="Yang G."/>
            <person name="Stott J.M."/>
            <person name="Schein J.E."/>
            <person name="Shin H."/>
            <person name="Smailus D."/>
            <person name="Siddiqui A.S."/>
            <person name="Marra M.A."/>
            <person name="Jones S.J.M."/>
            <person name="Holt R."/>
            <person name="Brinkman F.S.L."/>
            <person name="Miyauchi K."/>
            <person name="Fukuda M."/>
            <person name="Davies J.E."/>
            <person name="Mohn W.W."/>
            <person name="Eltis L.D."/>
        </authorList>
    </citation>
    <scope>NUCLEOTIDE SEQUENCE [LARGE SCALE GENOMIC DNA]</scope>
    <source>
        <strain>RHA1</strain>
    </source>
</reference>
<comment type="function">
    <text evidence="1">Single strand-specific metallo-endoribonuclease involved in late-stage 70S ribosome quality control and in maturation of the 3' terminus of the 16S rRNA.</text>
</comment>
<comment type="cofactor">
    <cofactor evidence="1">
        <name>Zn(2+)</name>
        <dbReference type="ChEBI" id="CHEBI:29105"/>
    </cofactor>
    <text evidence="1">Binds 1 zinc ion.</text>
</comment>
<comment type="subcellular location">
    <subcellularLocation>
        <location evidence="1">Cytoplasm</location>
    </subcellularLocation>
</comment>
<comment type="similarity">
    <text evidence="1">Belongs to the endoribonuclease YbeY family.</text>
</comment>
<feature type="chain" id="PRO_0000284290" description="Endoribonuclease YbeY">
    <location>
        <begin position="1"/>
        <end position="180"/>
    </location>
</feature>
<feature type="binding site" evidence="1">
    <location>
        <position position="118"/>
    </location>
    <ligand>
        <name>Zn(2+)</name>
        <dbReference type="ChEBI" id="CHEBI:29105"/>
        <note>catalytic</note>
    </ligand>
</feature>
<feature type="binding site" evidence="1">
    <location>
        <position position="122"/>
    </location>
    <ligand>
        <name>Zn(2+)</name>
        <dbReference type="ChEBI" id="CHEBI:29105"/>
        <note>catalytic</note>
    </ligand>
</feature>
<feature type="binding site" evidence="1">
    <location>
        <position position="128"/>
    </location>
    <ligand>
        <name>Zn(2+)</name>
        <dbReference type="ChEBI" id="CHEBI:29105"/>
        <note>catalytic</note>
    </ligand>
</feature>
<name>YBEY_RHOJR</name>
<dbReference type="EC" id="3.1.-.-" evidence="1"/>
<dbReference type="EMBL" id="CP000431">
    <property type="protein sequence ID" value="ABG93065.1"/>
    <property type="molecule type" value="Genomic_DNA"/>
</dbReference>
<dbReference type="RefSeq" id="WP_009473949.1">
    <property type="nucleotide sequence ID" value="NC_008268.1"/>
</dbReference>
<dbReference type="SMR" id="Q0SHC1"/>
<dbReference type="KEGG" id="rha:RHA1_ro01241"/>
<dbReference type="eggNOG" id="COG0319">
    <property type="taxonomic scope" value="Bacteria"/>
</dbReference>
<dbReference type="HOGENOM" id="CLU_106710_3_2_11"/>
<dbReference type="OrthoDB" id="9807740at2"/>
<dbReference type="Proteomes" id="UP000008710">
    <property type="component" value="Chromosome"/>
</dbReference>
<dbReference type="GO" id="GO:0005737">
    <property type="term" value="C:cytoplasm"/>
    <property type="evidence" value="ECO:0007669"/>
    <property type="project" value="UniProtKB-SubCell"/>
</dbReference>
<dbReference type="GO" id="GO:0004222">
    <property type="term" value="F:metalloendopeptidase activity"/>
    <property type="evidence" value="ECO:0007669"/>
    <property type="project" value="InterPro"/>
</dbReference>
<dbReference type="GO" id="GO:0004521">
    <property type="term" value="F:RNA endonuclease activity"/>
    <property type="evidence" value="ECO:0007669"/>
    <property type="project" value="UniProtKB-UniRule"/>
</dbReference>
<dbReference type="GO" id="GO:0008270">
    <property type="term" value="F:zinc ion binding"/>
    <property type="evidence" value="ECO:0007669"/>
    <property type="project" value="UniProtKB-UniRule"/>
</dbReference>
<dbReference type="GO" id="GO:0006364">
    <property type="term" value="P:rRNA processing"/>
    <property type="evidence" value="ECO:0007669"/>
    <property type="project" value="UniProtKB-UniRule"/>
</dbReference>
<dbReference type="Gene3D" id="3.40.390.30">
    <property type="entry name" value="Metalloproteases ('zincins'), catalytic domain"/>
    <property type="match status" value="1"/>
</dbReference>
<dbReference type="HAMAP" id="MF_00009">
    <property type="entry name" value="Endoribonucl_YbeY"/>
    <property type="match status" value="1"/>
</dbReference>
<dbReference type="InterPro" id="IPR023091">
    <property type="entry name" value="MetalPrtase_cat_dom_sf_prd"/>
</dbReference>
<dbReference type="InterPro" id="IPR002036">
    <property type="entry name" value="YbeY"/>
</dbReference>
<dbReference type="InterPro" id="IPR020549">
    <property type="entry name" value="YbeY_CS"/>
</dbReference>
<dbReference type="NCBIfam" id="TIGR00043">
    <property type="entry name" value="rRNA maturation RNase YbeY"/>
    <property type="match status" value="1"/>
</dbReference>
<dbReference type="PANTHER" id="PTHR46986">
    <property type="entry name" value="ENDORIBONUCLEASE YBEY, CHLOROPLASTIC"/>
    <property type="match status" value="1"/>
</dbReference>
<dbReference type="PANTHER" id="PTHR46986:SF1">
    <property type="entry name" value="ENDORIBONUCLEASE YBEY, CHLOROPLASTIC"/>
    <property type="match status" value="1"/>
</dbReference>
<dbReference type="Pfam" id="PF02130">
    <property type="entry name" value="YbeY"/>
    <property type="match status" value="1"/>
</dbReference>
<dbReference type="SUPFAM" id="SSF55486">
    <property type="entry name" value="Metalloproteases ('zincins'), catalytic domain"/>
    <property type="match status" value="1"/>
</dbReference>
<dbReference type="PROSITE" id="PS01306">
    <property type="entry name" value="UPF0054"/>
    <property type="match status" value="1"/>
</dbReference>
<keyword id="KW-0963">Cytoplasm</keyword>
<keyword id="KW-0255">Endonuclease</keyword>
<keyword id="KW-0378">Hydrolase</keyword>
<keyword id="KW-0479">Metal-binding</keyword>
<keyword id="KW-0540">Nuclease</keyword>
<keyword id="KW-0690">Ribosome biogenesis</keyword>
<keyword id="KW-0698">rRNA processing</keyword>
<keyword id="KW-0862">Zinc</keyword>